<name>SSRP_BUCAP</name>
<reference key="1">
    <citation type="journal article" date="2002" name="Science">
        <title>50 million years of genomic stasis in endosymbiotic bacteria.</title>
        <authorList>
            <person name="Tamas I."/>
            <person name="Klasson L."/>
            <person name="Canbaeck B."/>
            <person name="Naeslund A.K."/>
            <person name="Eriksson A.-S."/>
            <person name="Wernegreen J.J."/>
            <person name="Sandstroem J.P."/>
            <person name="Moran N.A."/>
            <person name="Andersson S.G.E."/>
        </authorList>
    </citation>
    <scope>NUCLEOTIDE SEQUENCE [LARGE SCALE GENOMIC DNA]</scope>
    <source>
        <strain>Sg</strain>
    </source>
</reference>
<protein>
    <recommendedName>
        <fullName evidence="1">SsrA-binding protein</fullName>
    </recommendedName>
    <alternativeName>
        <fullName evidence="1">Small protein B</fullName>
    </alternativeName>
</protein>
<evidence type="ECO:0000255" key="1">
    <source>
        <dbReference type="HAMAP-Rule" id="MF_00023"/>
    </source>
</evidence>
<organism>
    <name type="scientific">Buchnera aphidicola subsp. Schizaphis graminum (strain Sg)</name>
    <dbReference type="NCBI Taxonomy" id="198804"/>
    <lineage>
        <taxon>Bacteria</taxon>
        <taxon>Pseudomonadati</taxon>
        <taxon>Pseudomonadota</taxon>
        <taxon>Gammaproteobacteria</taxon>
        <taxon>Enterobacterales</taxon>
        <taxon>Erwiniaceae</taxon>
        <taxon>Buchnera</taxon>
    </lineage>
</organism>
<dbReference type="EMBL" id="AE013218">
    <property type="protein sequence ID" value="AAM67804.1"/>
    <property type="molecule type" value="Genomic_DNA"/>
</dbReference>
<dbReference type="RefSeq" id="WP_011053771.1">
    <property type="nucleotide sequence ID" value="NC_004061.1"/>
</dbReference>
<dbReference type="SMR" id="Q8K9R5"/>
<dbReference type="STRING" id="198804.BUsg_245"/>
<dbReference type="GeneID" id="93003715"/>
<dbReference type="KEGG" id="bas:BUsg_245"/>
<dbReference type="eggNOG" id="COG0691">
    <property type="taxonomic scope" value="Bacteria"/>
</dbReference>
<dbReference type="HOGENOM" id="CLU_108953_3_0_6"/>
<dbReference type="Proteomes" id="UP000000416">
    <property type="component" value="Chromosome"/>
</dbReference>
<dbReference type="GO" id="GO:0005829">
    <property type="term" value="C:cytosol"/>
    <property type="evidence" value="ECO:0007669"/>
    <property type="project" value="TreeGrafter"/>
</dbReference>
<dbReference type="GO" id="GO:0003723">
    <property type="term" value="F:RNA binding"/>
    <property type="evidence" value="ECO:0007669"/>
    <property type="project" value="UniProtKB-UniRule"/>
</dbReference>
<dbReference type="GO" id="GO:0070929">
    <property type="term" value="P:trans-translation"/>
    <property type="evidence" value="ECO:0007669"/>
    <property type="project" value="UniProtKB-UniRule"/>
</dbReference>
<dbReference type="CDD" id="cd09294">
    <property type="entry name" value="SmpB"/>
    <property type="match status" value="1"/>
</dbReference>
<dbReference type="Gene3D" id="2.40.280.10">
    <property type="match status" value="1"/>
</dbReference>
<dbReference type="HAMAP" id="MF_00023">
    <property type="entry name" value="SmpB"/>
    <property type="match status" value="1"/>
</dbReference>
<dbReference type="InterPro" id="IPR023620">
    <property type="entry name" value="SmpB"/>
</dbReference>
<dbReference type="InterPro" id="IPR000037">
    <property type="entry name" value="SsrA-bd_prot"/>
</dbReference>
<dbReference type="InterPro" id="IPR020081">
    <property type="entry name" value="SsrA-bd_prot_CS"/>
</dbReference>
<dbReference type="NCBIfam" id="NF003843">
    <property type="entry name" value="PRK05422.1"/>
    <property type="match status" value="1"/>
</dbReference>
<dbReference type="NCBIfam" id="TIGR00086">
    <property type="entry name" value="smpB"/>
    <property type="match status" value="1"/>
</dbReference>
<dbReference type="PANTHER" id="PTHR30308:SF2">
    <property type="entry name" value="SSRA-BINDING PROTEIN"/>
    <property type="match status" value="1"/>
</dbReference>
<dbReference type="PANTHER" id="PTHR30308">
    <property type="entry name" value="TMRNA-BINDING COMPONENT OF TRANS-TRANSLATION TAGGING COMPLEX"/>
    <property type="match status" value="1"/>
</dbReference>
<dbReference type="Pfam" id="PF01668">
    <property type="entry name" value="SmpB"/>
    <property type="match status" value="1"/>
</dbReference>
<dbReference type="SUPFAM" id="SSF74982">
    <property type="entry name" value="Small protein B (SmpB)"/>
    <property type="match status" value="1"/>
</dbReference>
<dbReference type="PROSITE" id="PS01317">
    <property type="entry name" value="SSRP"/>
    <property type="match status" value="1"/>
</dbReference>
<gene>
    <name evidence="1" type="primary">smpB</name>
    <name type="ordered locus">BUsg_245</name>
</gene>
<keyword id="KW-0963">Cytoplasm</keyword>
<keyword id="KW-0694">RNA-binding</keyword>
<proteinExistence type="inferred from homology"/>
<feature type="chain" id="PRO_0000102921" description="SsrA-binding protein">
    <location>
        <begin position="1"/>
        <end position="163"/>
    </location>
</feature>
<accession>Q8K9R5</accession>
<comment type="function">
    <text evidence="1">Required for rescue of stalled ribosomes mediated by trans-translation. Binds to transfer-messenger RNA (tmRNA), required for stable association of tmRNA with ribosomes. tmRNA and SmpB together mimic tRNA shape, replacing the anticodon stem-loop with SmpB. tmRNA is encoded by the ssrA gene; the 2 termini fold to resemble tRNA(Ala) and it encodes a 'tag peptide', a short internal open reading frame. During trans-translation Ala-aminoacylated tmRNA acts like a tRNA, entering the A-site of stalled ribosomes, displacing the stalled mRNA. The ribosome then switches to translate the ORF on the tmRNA; the nascent peptide is terminated with the 'tag peptide' encoded by the tmRNA and targeted for degradation. The ribosome is freed to recommence translation, which seems to be the essential function of trans-translation.</text>
</comment>
<comment type="subcellular location">
    <subcellularLocation>
        <location evidence="1">Cytoplasm</location>
    </subcellularLocation>
    <text evidence="1">The tmRNA-SmpB complex associates with stalled 70S ribosomes.</text>
</comment>
<comment type="similarity">
    <text evidence="1">Belongs to the SmpB family.</text>
</comment>
<sequence length="163" mass="19246">MSYKKKRCLKSSIICKNKKAYYNYFIEEVFQSGLVLMGWEVKSIRLGQVNIIESYINNDNLNEMYLYNSIVQPLHTSSNYVSCDSSRKRKLLLHKNEIQYLCNKKNKIGSTLVALSLFWEKSWCKLNFGLAKGKTKIDKRASEKQNEWKKEKLKILKKVKFQN</sequence>